<keyword id="KW-1185">Reference proteome</keyword>
<keyword id="KW-0687">Ribonucleoprotein</keyword>
<keyword id="KW-0689">Ribosomal protein</keyword>
<keyword id="KW-0694">RNA-binding</keyword>
<keyword id="KW-0699">rRNA-binding</keyword>
<sequence length="176" mass="19142">MKPIIEQKAKVVAEIEEMIKSSQAAILVDYRGLTVAEMTELRRKLKEKGAEIKVVKNTLAKRAAHNLGITGLDPYLEGPTALAVAKEDPASAAKVLFDFAKDHPNLEIKVGILENIVLEKDQVKAIADLPPRNVLLAKLLGGMQAPLYGFAGALAGMLRKFVYALEAIRKQKAGEE</sequence>
<comment type="function">
    <text evidence="1">Forms part of the ribosomal stalk, playing a central role in the interaction of the ribosome with GTP-bound translation factors.</text>
</comment>
<comment type="subunit">
    <text evidence="1">Part of the ribosomal stalk of the 50S ribosomal subunit. The N-terminus interacts with L11 and the large rRNA to form the base of the stalk. The C-terminus forms an elongated spine to which L12 dimers bind in a sequential fashion forming a multimeric L10(L12)X complex.</text>
</comment>
<comment type="similarity">
    <text evidence="1">Belongs to the universal ribosomal protein uL10 family.</text>
</comment>
<protein>
    <recommendedName>
        <fullName evidence="1">Large ribosomal subunit protein uL10</fullName>
    </recommendedName>
    <alternativeName>
        <fullName evidence="2">50S ribosomal protein L10</fullName>
    </alternativeName>
</protein>
<evidence type="ECO:0000255" key="1">
    <source>
        <dbReference type="HAMAP-Rule" id="MF_00362"/>
    </source>
</evidence>
<evidence type="ECO:0000305" key="2"/>
<feature type="chain" id="PRO_0000234840" description="Large ribosomal subunit protein uL10">
    <location>
        <begin position="1"/>
        <end position="176"/>
    </location>
</feature>
<proteinExistence type="inferred from homology"/>
<dbReference type="EMBL" id="CP000141">
    <property type="protein sequence ID" value="ABB13899.1"/>
    <property type="molecule type" value="Genomic_DNA"/>
</dbReference>
<dbReference type="RefSeq" id="WP_011345203.1">
    <property type="nucleotide sequence ID" value="NC_007503.1"/>
</dbReference>
<dbReference type="SMR" id="Q3A9Q4"/>
<dbReference type="FunCoup" id="Q3A9Q4">
    <property type="interactions" value="468"/>
</dbReference>
<dbReference type="STRING" id="246194.CHY_2321"/>
<dbReference type="KEGG" id="chy:CHY_2321"/>
<dbReference type="eggNOG" id="COG0244">
    <property type="taxonomic scope" value="Bacteria"/>
</dbReference>
<dbReference type="HOGENOM" id="CLU_092227_2_0_9"/>
<dbReference type="InParanoid" id="Q3A9Q4"/>
<dbReference type="OrthoDB" id="9808307at2"/>
<dbReference type="Proteomes" id="UP000002706">
    <property type="component" value="Chromosome"/>
</dbReference>
<dbReference type="GO" id="GO:0015934">
    <property type="term" value="C:large ribosomal subunit"/>
    <property type="evidence" value="ECO:0007669"/>
    <property type="project" value="InterPro"/>
</dbReference>
<dbReference type="GO" id="GO:0070180">
    <property type="term" value="F:large ribosomal subunit rRNA binding"/>
    <property type="evidence" value="ECO:0007669"/>
    <property type="project" value="UniProtKB-UniRule"/>
</dbReference>
<dbReference type="GO" id="GO:0003735">
    <property type="term" value="F:structural constituent of ribosome"/>
    <property type="evidence" value="ECO:0007669"/>
    <property type="project" value="InterPro"/>
</dbReference>
<dbReference type="GO" id="GO:0006412">
    <property type="term" value="P:translation"/>
    <property type="evidence" value="ECO:0007669"/>
    <property type="project" value="UniProtKB-UniRule"/>
</dbReference>
<dbReference type="CDD" id="cd05797">
    <property type="entry name" value="Ribosomal_L10"/>
    <property type="match status" value="1"/>
</dbReference>
<dbReference type="Gene3D" id="3.30.70.1730">
    <property type="match status" value="1"/>
</dbReference>
<dbReference type="Gene3D" id="6.10.250.290">
    <property type="match status" value="1"/>
</dbReference>
<dbReference type="HAMAP" id="MF_00362">
    <property type="entry name" value="Ribosomal_uL10"/>
    <property type="match status" value="1"/>
</dbReference>
<dbReference type="InterPro" id="IPR001790">
    <property type="entry name" value="Ribosomal_uL10"/>
</dbReference>
<dbReference type="InterPro" id="IPR043141">
    <property type="entry name" value="Ribosomal_uL10-like_sf"/>
</dbReference>
<dbReference type="InterPro" id="IPR022973">
    <property type="entry name" value="Ribosomal_uL10_bac"/>
</dbReference>
<dbReference type="InterPro" id="IPR047865">
    <property type="entry name" value="Ribosomal_uL10_bac_type"/>
</dbReference>
<dbReference type="InterPro" id="IPR002363">
    <property type="entry name" value="Ribosomal_uL10_CS_bac"/>
</dbReference>
<dbReference type="NCBIfam" id="NF000955">
    <property type="entry name" value="PRK00099.1-1"/>
    <property type="match status" value="1"/>
</dbReference>
<dbReference type="PANTHER" id="PTHR11560">
    <property type="entry name" value="39S RIBOSOMAL PROTEIN L10, MITOCHONDRIAL"/>
    <property type="match status" value="1"/>
</dbReference>
<dbReference type="Pfam" id="PF00466">
    <property type="entry name" value="Ribosomal_L10"/>
    <property type="match status" value="1"/>
</dbReference>
<dbReference type="SUPFAM" id="SSF160369">
    <property type="entry name" value="Ribosomal protein L10-like"/>
    <property type="match status" value="1"/>
</dbReference>
<dbReference type="PROSITE" id="PS01109">
    <property type="entry name" value="RIBOSOMAL_L10"/>
    <property type="match status" value="1"/>
</dbReference>
<reference key="1">
    <citation type="journal article" date="2005" name="PLoS Genet.">
        <title>Life in hot carbon monoxide: the complete genome sequence of Carboxydothermus hydrogenoformans Z-2901.</title>
        <authorList>
            <person name="Wu M."/>
            <person name="Ren Q."/>
            <person name="Durkin A.S."/>
            <person name="Daugherty S.C."/>
            <person name="Brinkac L.M."/>
            <person name="Dodson R.J."/>
            <person name="Madupu R."/>
            <person name="Sullivan S.A."/>
            <person name="Kolonay J.F."/>
            <person name="Nelson W.C."/>
            <person name="Tallon L.J."/>
            <person name="Jones K.M."/>
            <person name="Ulrich L.E."/>
            <person name="Gonzalez J.M."/>
            <person name="Zhulin I.B."/>
            <person name="Robb F.T."/>
            <person name="Eisen J.A."/>
        </authorList>
    </citation>
    <scope>NUCLEOTIDE SEQUENCE [LARGE SCALE GENOMIC DNA]</scope>
    <source>
        <strain>ATCC BAA-161 / DSM 6008 / Z-2901</strain>
    </source>
</reference>
<organism>
    <name type="scientific">Carboxydothermus hydrogenoformans (strain ATCC BAA-161 / DSM 6008 / Z-2901)</name>
    <dbReference type="NCBI Taxonomy" id="246194"/>
    <lineage>
        <taxon>Bacteria</taxon>
        <taxon>Bacillati</taxon>
        <taxon>Bacillota</taxon>
        <taxon>Clostridia</taxon>
        <taxon>Thermoanaerobacterales</taxon>
        <taxon>Thermoanaerobacteraceae</taxon>
        <taxon>Carboxydothermus</taxon>
    </lineage>
</organism>
<accession>Q3A9Q4</accession>
<name>RL10_CARHZ</name>
<gene>
    <name evidence="1" type="primary">rplJ</name>
    <name type="ordered locus">CHY_2321</name>
</gene>